<reference key="1">
    <citation type="submission" date="2002-04" db="EMBL/GenBank/DDBJ databases">
        <title>Rice ethylene receptor homolog OSPK3.</title>
        <authorList>
            <person name="Zhang J.-S."/>
            <person name="Dong Y."/>
            <person name="Cao W.-H."/>
            <person name="Chen S.-Y."/>
        </authorList>
    </citation>
    <scope>NUCLEOTIDE SEQUENCE [MRNA]</scope>
    <source>
        <strain>cv. Lansheng</strain>
    </source>
</reference>
<reference key="2">
    <citation type="journal article" date="2005" name="Nature">
        <title>The map-based sequence of the rice genome.</title>
        <authorList>
            <consortium name="International rice genome sequencing project (IRGSP)"/>
        </authorList>
    </citation>
    <scope>NUCLEOTIDE SEQUENCE [LARGE SCALE GENOMIC DNA]</scope>
    <source>
        <strain>cv. Nipponbare</strain>
    </source>
</reference>
<reference key="3">
    <citation type="journal article" date="2008" name="Nucleic Acids Res.">
        <title>The rice annotation project database (RAP-DB): 2008 update.</title>
        <authorList>
            <consortium name="The rice annotation project (RAP)"/>
        </authorList>
    </citation>
    <scope>GENOME REANNOTATION</scope>
    <source>
        <strain>cv. Nipponbare</strain>
    </source>
</reference>
<reference key="4">
    <citation type="journal article" date="2013" name="Rice">
        <title>Improvement of the Oryza sativa Nipponbare reference genome using next generation sequence and optical map data.</title>
        <authorList>
            <person name="Kawahara Y."/>
            <person name="de la Bastide M."/>
            <person name="Hamilton J.P."/>
            <person name="Kanamori H."/>
            <person name="McCombie W.R."/>
            <person name="Ouyang S."/>
            <person name="Schwartz D.C."/>
            <person name="Tanaka T."/>
            <person name="Wu J."/>
            <person name="Zhou S."/>
            <person name="Childs K.L."/>
            <person name="Davidson R.M."/>
            <person name="Lin H."/>
            <person name="Quesada-Ocampo L."/>
            <person name="Vaillancourt B."/>
            <person name="Sakai H."/>
            <person name="Lee S.S."/>
            <person name="Kim J."/>
            <person name="Numa H."/>
            <person name="Itoh T."/>
            <person name="Buell C.R."/>
            <person name="Matsumoto T."/>
        </authorList>
    </citation>
    <scope>GENOME REANNOTATION</scope>
    <source>
        <strain>cv. Nipponbare</strain>
    </source>
</reference>
<reference key="5">
    <citation type="journal article" date="2005" name="PLoS Biol.">
        <title>The genomes of Oryza sativa: a history of duplications.</title>
        <authorList>
            <person name="Yu J."/>
            <person name="Wang J."/>
            <person name="Lin W."/>
            <person name="Li S."/>
            <person name="Li H."/>
            <person name="Zhou J."/>
            <person name="Ni P."/>
            <person name="Dong W."/>
            <person name="Hu S."/>
            <person name="Zeng C."/>
            <person name="Zhang J."/>
            <person name="Zhang Y."/>
            <person name="Li R."/>
            <person name="Xu Z."/>
            <person name="Li S."/>
            <person name="Li X."/>
            <person name="Zheng H."/>
            <person name="Cong L."/>
            <person name="Lin L."/>
            <person name="Yin J."/>
            <person name="Geng J."/>
            <person name="Li G."/>
            <person name="Shi J."/>
            <person name="Liu J."/>
            <person name="Lv H."/>
            <person name="Li J."/>
            <person name="Wang J."/>
            <person name="Deng Y."/>
            <person name="Ran L."/>
            <person name="Shi X."/>
            <person name="Wang X."/>
            <person name="Wu Q."/>
            <person name="Li C."/>
            <person name="Ren X."/>
            <person name="Wang J."/>
            <person name="Wang X."/>
            <person name="Li D."/>
            <person name="Liu D."/>
            <person name="Zhang X."/>
            <person name="Ji Z."/>
            <person name="Zhao W."/>
            <person name="Sun Y."/>
            <person name="Zhang Z."/>
            <person name="Bao J."/>
            <person name="Han Y."/>
            <person name="Dong L."/>
            <person name="Ji J."/>
            <person name="Chen P."/>
            <person name="Wu S."/>
            <person name="Liu J."/>
            <person name="Xiao Y."/>
            <person name="Bu D."/>
            <person name="Tan J."/>
            <person name="Yang L."/>
            <person name="Ye C."/>
            <person name="Zhang J."/>
            <person name="Xu J."/>
            <person name="Zhou Y."/>
            <person name="Yu Y."/>
            <person name="Zhang B."/>
            <person name="Zhuang S."/>
            <person name="Wei H."/>
            <person name="Liu B."/>
            <person name="Lei M."/>
            <person name="Yu H."/>
            <person name="Li Y."/>
            <person name="Xu H."/>
            <person name="Wei S."/>
            <person name="He X."/>
            <person name="Fang L."/>
            <person name="Zhang Z."/>
            <person name="Zhang Y."/>
            <person name="Huang X."/>
            <person name="Su Z."/>
            <person name="Tong W."/>
            <person name="Li J."/>
            <person name="Tong Z."/>
            <person name="Li S."/>
            <person name="Ye J."/>
            <person name="Wang L."/>
            <person name="Fang L."/>
            <person name="Lei T."/>
            <person name="Chen C.-S."/>
            <person name="Chen H.-C."/>
            <person name="Xu Z."/>
            <person name="Li H."/>
            <person name="Huang H."/>
            <person name="Zhang F."/>
            <person name="Xu H."/>
            <person name="Li N."/>
            <person name="Zhao C."/>
            <person name="Li S."/>
            <person name="Dong L."/>
            <person name="Huang Y."/>
            <person name="Li L."/>
            <person name="Xi Y."/>
            <person name="Qi Q."/>
            <person name="Li W."/>
            <person name="Zhang B."/>
            <person name="Hu W."/>
            <person name="Zhang Y."/>
            <person name="Tian X."/>
            <person name="Jiao Y."/>
            <person name="Liang X."/>
            <person name="Jin J."/>
            <person name="Gao L."/>
            <person name="Zheng W."/>
            <person name="Hao B."/>
            <person name="Liu S.-M."/>
            <person name="Wang W."/>
            <person name="Yuan L."/>
            <person name="Cao M."/>
            <person name="McDermott J."/>
            <person name="Samudrala R."/>
            <person name="Wang J."/>
            <person name="Wong G.K.-S."/>
            <person name="Yang H."/>
        </authorList>
    </citation>
    <scope>NUCLEOTIDE SEQUENCE [LARGE SCALE GENOMIC DNA]</scope>
    <source>
        <strain>cv. Nipponbare</strain>
    </source>
</reference>
<reference key="6">
    <citation type="journal article" date="2003" name="Science">
        <title>Collection, mapping, and annotation of over 28,000 cDNA clones from japonica rice.</title>
        <authorList>
            <consortium name="The rice full-length cDNA consortium"/>
        </authorList>
    </citation>
    <scope>NUCLEOTIDE SEQUENCE [LARGE SCALE MRNA]</scope>
    <source>
        <strain>cv. Nipponbare</strain>
    </source>
</reference>
<reference key="7">
    <citation type="journal article" date="2006" name="Plant Physiol.">
        <title>Whole-genome analysis of Oryza sativa reveals similar architecture of two-component signaling machinery with Arabidopsis.</title>
        <authorList>
            <person name="Pareek A."/>
            <person name="Singh A."/>
            <person name="Kumar M."/>
            <person name="Kushwaha H.R."/>
            <person name="Lynn A.M."/>
            <person name="Singla-Pareek S.L."/>
        </authorList>
    </citation>
    <scope>DISRUPTION PHENOTYPE</scope>
</reference>
<sequence length="777" mass="83177">MAMVTARQFLASAAELGSGRRRCGGGGACDMREDGGVEALMQCQRVSDLLIAASFLSIPLELFYFATCADLSEVKCAVLHFCAFIVLCGATHLLAAFTHAHPHSAPLLRALTAAKVLAAVASSAAAVSLLTFIPKLLRIKVRESLLRDKASRLHRDLGLVRRREEATSRAVRELTGRIRASPPDAHAILRTTALQLADALGLHACAVWMPAAGRPHDLVLVHHLTSRPDDAADLLLEVGDACTVAADDPDVVDVMASKVAKVLGPDSALAMASSVGAAPAGAVAAIRIPILRVSIYDGGGTPEVTEASYAILVLLLPPHDAAGGWSSHDLEIVQVVADQAAVALSHAAVLEESRSMRDRFAEQHRALMQAKHRAAMATRAFSSIQSAMCHAMRRPVHSVVGLVSMLQHPEADTMRPEQRLAVDAIARTSNLLSALMDEVTVNRQHLSVQRKPFSLHALIKEAISVAGCLSHCGGAGFLHQPECALPEWVVGDERRVFHLLLDMVGTLLNRCNTGSGACRLSFSVRICNVGEERYSLDWIPMRPTFSGCNVCVKFKVGIGRSRSCAIERSLPCELPRRSAATTSSQMGHIFSGYFNKIVQMMNGNMWSASDSEGVGESVTLILQFKLQQGHVEASPPYIPHLNGLRVLLADDDAMNRGVTKKILERLGCQVMSAPSGAHCLSLLASAEASFQLVVLDLDDRAVPSAAMDRFEVALRIRELRNSCWLLIVIAVAAGVVATDDGGAVQELCQRAGINGLVQKPVTLPALGAQLCRVLQDN</sequence>
<dbReference type="EC" id="2.7.13.3" evidence="6"/>
<dbReference type="EMBL" id="AF497626">
    <property type="protein sequence ID" value="AAQ07254.1"/>
    <property type="molecule type" value="mRNA"/>
</dbReference>
<dbReference type="EMBL" id="AP003755">
    <property type="protein sequence ID" value="BAC21334.1"/>
    <property type="molecule type" value="Genomic_DNA"/>
</dbReference>
<dbReference type="EMBL" id="AP003756">
    <property type="protein sequence ID" value="BAD30215.1"/>
    <property type="molecule type" value="Genomic_DNA"/>
</dbReference>
<dbReference type="EMBL" id="AP008213">
    <property type="protein sequence ID" value="BAF21232.1"/>
    <property type="molecule type" value="Genomic_DNA"/>
</dbReference>
<dbReference type="EMBL" id="AP014963">
    <property type="protein sequence ID" value="BAT00886.1"/>
    <property type="molecule type" value="Genomic_DNA"/>
</dbReference>
<dbReference type="EMBL" id="CM000144">
    <property type="protein sequence ID" value="EAZ39331.1"/>
    <property type="molecule type" value="Genomic_DNA"/>
</dbReference>
<dbReference type="EMBL" id="AK109593">
    <property type="protein sequence ID" value="BAG98813.1"/>
    <property type="molecule type" value="mRNA"/>
</dbReference>
<dbReference type="RefSeq" id="XP_015646180.1">
    <property type="nucleotide sequence ID" value="XM_015790694.1"/>
</dbReference>
<dbReference type="FunCoup" id="Q7F239">
    <property type="interactions" value="137"/>
</dbReference>
<dbReference type="STRING" id="39947.Q7F239"/>
<dbReference type="PaxDb" id="39947-Q7F239"/>
<dbReference type="EnsemblPlants" id="Os07t0259100-01">
    <property type="protein sequence ID" value="Os07t0259100-01"/>
    <property type="gene ID" value="Os07g0259100"/>
</dbReference>
<dbReference type="Gramene" id="Os07t0259100-01">
    <property type="protein sequence ID" value="Os07t0259100-01"/>
    <property type="gene ID" value="Os07g0259100"/>
</dbReference>
<dbReference type="KEGG" id="dosa:Os07g0259100"/>
<dbReference type="eggNOG" id="KOG0519">
    <property type="taxonomic scope" value="Eukaryota"/>
</dbReference>
<dbReference type="HOGENOM" id="CLU_000445_114_48_1"/>
<dbReference type="InParanoid" id="Q7F239"/>
<dbReference type="OMA" id="ACAVWMP"/>
<dbReference type="OrthoDB" id="647750at2759"/>
<dbReference type="Proteomes" id="UP000000763">
    <property type="component" value="Chromosome 7"/>
</dbReference>
<dbReference type="Proteomes" id="UP000007752">
    <property type="component" value="Chromosome 7"/>
</dbReference>
<dbReference type="Proteomes" id="UP000059680">
    <property type="component" value="Chromosome 7"/>
</dbReference>
<dbReference type="GO" id="GO:0005783">
    <property type="term" value="C:endoplasmic reticulum"/>
    <property type="evidence" value="ECO:0000318"/>
    <property type="project" value="GO_Central"/>
</dbReference>
<dbReference type="GO" id="GO:0005789">
    <property type="term" value="C:endoplasmic reticulum membrane"/>
    <property type="evidence" value="ECO:0007669"/>
    <property type="project" value="UniProtKB-SubCell"/>
</dbReference>
<dbReference type="GO" id="GO:0005524">
    <property type="term" value="F:ATP binding"/>
    <property type="evidence" value="ECO:0007669"/>
    <property type="project" value="UniProtKB-KW"/>
</dbReference>
<dbReference type="GO" id="GO:0051740">
    <property type="term" value="F:ethylene binding"/>
    <property type="evidence" value="ECO:0000318"/>
    <property type="project" value="GO_Central"/>
</dbReference>
<dbReference type="GO" id="GO:0038199">
    <property type="term" value="F:ethylene receptor activity"/>
    <property type="evidence" value="ECO:0000318"/>
    <property type="project" value="GO_Central"/>
</dbReference>
<dbReference type="GO" id="GO:0046872">
    <property type="term" value="F:metal ion binding"/>
    <property type="evidence" value="ECO:0007669"/>
    <property type="project" value="UniProtKB-KW"/>
</dbReference>
<dbReference type="GO" id="GO:0000155">
    <property type="term" value="F:phosphorelay sensor kinase activity"/>
    <property type="evidence" value="ECO:0007669"/>
    <property type="project" value="InterPro"/>
</dbReference>
<dbReference type="CDD" id="cd16938">
    <property type="entry name" value="HATPase_ETR2_ERS2-EIN4-like"/>
    <property type="match status" value="1"/>
</dbReference>
<dbReference type="FunFam" id="3.40.50.2300:FF:000366">
    <property type="entry name" value="Ethylene receptor"/>
    <property type="match status" value="1"/>
</dbReference>
<dbReference type="FunFam" id="1.10.287.130:FF:000087">
    <property type="entry name" value="Ethylene receptor 4"/>
    <property type="match status" value="1"/>
</dbReference>
<dbReference type="Gene3D" id="1.10.287.130">
    <property type="match status" value="1"/>
</dbReference>
<dbReference type="Gene3D" id="3.30.450.40">
    <property type="match status" value="1"/>
</dbReference>
<dbReference type="Gene3D" id="3.40.50.2300">
    <property type="match status" value="1"/>
</dbReference>
<dbReference type="InterPro" id="IPR011006">
    <property type="entry name" value="CheY-like_superfamily"/>
</dbReference>
<dbReference type="InterPro" id="IPR014525">
    <property type="entry name" value="ETR"/>
</dbReference>
<dbReference type="InterPro" id="IPR003018">
    <property type="entry name" value="GAF"/>
</dbReference>
<dbReference type="InterPro" id="IPR029016">
    <property type="entry name" value="GAF-like_dom_sf"/>
</dbReference>
<dbReference type="InterPro" id="IPR036097">
    <property type="entry name" value="HisK_dim/P_sf"/>
</dbReference>
<dbReference type="InterPro" id="IPR001789">
    <property type="entry name" value="Sig_transdc_resp-reg_receiver"/>
</dbReference>
<dbReference type="PANTHER" id="PTHR24423:SF618">
    <property type="entry name" value="ETHYLENE RECEPTOR 4"/>
    <property type="match status" value="1"/>
</dbReference>
<dbReference type="PANTHER" id="PTHR24423">
    <property type="entry name" value="TWO-COMPONENT SENSOR HISTIDINE KINASE"/>
    <property type="match status" value="1"/>
</dbReference>
<dbReference type="Pfam" id="PF25487">
    <property type="entry name" value="ETR1_N"/>
    <property type="match status" value="1"/>
</dbReference>
<dbReference type="Pfam" id="PF01590">
    <property type="entry name" value="GAF"/>
    <property type="match status" value="1"/>
</dbReference>
<dbReference type="PIRSF" id="PIRSF026389">
    <property type="entry name" value="Ethyln_sen_HK"/>
    <property type="match status" value="1"/>
</dbReference>
<dbReference type="SMART" id="SM00065">
    <property type="entry name" value="GAF"/>
    <property type="match status" value="1"/>
</dbReference>
<dbReference type="SMART" id="SM00448">
    <property type="entry name" value="REC"/>
    <property type="match status" value="1"/>
</dbReference>
<dbReference type="SUPFAM" id="SSF52172">
    <property type="entry name" value="CheY-like"/>
    <property type="match status" value="1"/>
</dbReference>
<dbReference type="SUPFAM" id="SSF55781">
    <property type="entry name" value="GAF domain-like"/>
    <property type="match status" value="1"/>
</dbReference>
<dbReference type="SUPFAM" id="SSF47384">
    <property type="entry name" value="Homodimeric domain of signal transducing histidine kinase"/>
    <property type="match status" value="1"/>
</dbReference>
<dbReference type="PROSITE" id="PS50110">
    <property type="entry name" value="RESPONSE_REGULATORY"/>
    <property type="match status" value="1"/>
</dbReference>
<accession>Q7F239</accession>
<accession>A0A0P0X4E5</accession>
<accession>Q71HN7</accession>
<organism>
    <name type="scientific">Oryza sativa subsp. japonica</name>
    <name type="common">Rice</name>
    <dbReference type="NCBI Taxonomy" id="39947"/>
    <lineage>
        <taxon>Eukaryota</taxon>
        <taxon>Viridiplantae</taxon>
        <taxon>Streptophyta</taxon>
        <taxon>Embryophyta</taxon>
        <taxon>Tracheophyta</taxon>
        <taxon>Spermatophyta</taxon>
        <taxon>Magnoliopsida</taxon>
        <taxon>Liliopsida</taxon>
        <taxon>Poales</taxon>
        <taxon>Poaceae</taxon>
        <taxon>BOP clade</taxon>
        <taxon>Oryzoideae</taxon>
        <taxon>Oryzeae</taxon>
        <taxon>Oryzinae</taxon>
        <taxon>Oryza</taxon>
        <taxon>Oryza sativa</taxon>
    </lineage>
</organism>
<comment type="function">
    <text evidence="1">Ethylene receptor related to bacterial two-component regulators. Acts as a redundant negative regulator of ethylene signaling.</text>
</comment>
<comment type="catalytic activity">
    <reaction evidence="6">
        <text>ATP + protein L-histidine = ADP + protein N-phospho-L-histidine.</text>
        <dbReference type="EC" id="2.7.13.3"/>
    </reaction>
</comment>
<comment type="cofactor">
    <cofactor evidence="1">
        <name>Cu cation</name>
        <dbReference type="ChEBI" id="CHEBI:23378"/>
    </cofactor>
    <text evidence="1">Binds 1 copper ion per dimer.</text>
</comment>
<comment type="subcellular location">
    <subcellularLocation>
        <location evidence="1">Endoplasmic reticulum membrane</location>
        <topology evidence="2">Multi-pass membrane protein</topology>
    </subcellularLocation>
</comment>
<comment type="disruption phenotype">
    <text evidence="5">Late heading, altered kernel color and viviparous phenotypes.</text>
</comment>
<comment type="similarity">
    <text evidence="6">Belongs to the ethylene receptor family.</text>
</comment>
<gene>
    <name type="primary">ETR4</name>
    <name evidence="10" type="ordered locus">Os07g0259100</name>
    <name evidence="6" type="ordered locus">LOC_Os07g15540</name>
    <name evidence="8" type="ORF">OJ1354_H07.118</name>
    <name evidence="9" type="ORF">OJ1370_E02.107</name>
    <name evidence="11" type="ORF">OsJ_23757</name>
</gene>
<evidence type="ECO:0000250" key="1">
    <source>
        <dbReference type="UniProtKB" id="P49333"/>
    </source>
</evidence>
<evidence type="ECO:0000255" key="2"/>
<evidence type="ECO:0000255" key="3">
    <source>
        <dbReference type="PROSITE-ProRule" id="PRU00107"/>
    </source>
</evidence>
<evidence type="ECO:0000255" key="4">
    <source>
        <dbReference type="PROSITE-ProRule" id="PRU00169"/>
    </source>
</evidence>
<evidence type="ECO:0000269" key="5">
    <source>
    </source>
</evidence>
<evidence type="ECO:0000305" key="6"/>
<evidence type="ECO:0000312" key="7">
    <source>
        <dbReference type="EMBL" id="AAQ07254.1"/>
    </source>
</evidence>
<evidence type="ECO:0000312" key="8">
    <source>
        <dbReference type="EMBL" id="BAC21334.1"/>
    </source>
</evidence>
<evidence type="ECO:0000312" key="9">
    <source>
        <dbReference type="EMBL" id="BAD30215.1"/>
    </source>
</evidence>
<evidence type="ECO:0000312" key="10">
    <source>
        <dbReference type="EMBL" id="BAF21232.1"/>
    </source>
</evidence>
<evidence type="ECO:0000312" key="11">
    <source>
        <dbReference type="EMBL" id="EAZ39331.1"/>
    </source>
</evidence>
<name>ETR4_ORYSJ</name>
<feature type="chain" id="PRO_0000433869" description="Ethylene receptor 4">
    <location>
        <begin position="1"/>
        <end position="777"/>
    </location>
</feature>
<feature type="transmembrane region" description="Helical" evidence="2">
    <location>
        <begin position="49"/>
        <end position="69"/>
    </location>
</feature>
<feature type="transmembrane region" description="Helical" evidence="2">
    <location>
        <begin position="77"/>
        <end position="97"/>
    </location>
</feature>
<feature type="transmembrane region" description="Helical" evidence="2">
    <location>
        <begin position="113"/>
        <end position="133"/>
    </location>
</feature>
<feature type="domain" description="GAF" evidence="6">
    <location>
        <begin position="184"/>
        <end position="344"/>
    </location>
</feature>
<feature type="domain" description="Histidine kinase" evidence="3">
    <location>
        <begin position="387"/>
        <end position="521"/>
    </location>
</feature>
<feature type="domain" description="Response regulatory" evidence="4">
    <location>
        <begin position="645"/>
        <end position="774"/>
    </location>
</feature>
<feature type="binding site" evidence="1">
    <location>
        <position position="88"/>
    </location>
    <ligand>
        <name>Cu cation</name>
        <dbReference type="ChEBI" id="CHEBI:23378"/>
    </ligand>
</feature>
<feature type="binding site" evidence="1">
    <location>
        <position position="92"/>
    </location>
    <ligand>
        <name>Cu cation</name>
        <dbReference type="ChEBI" id="CHEBI:23378"/>
    </ligand>
</feature>
<feature type="modified residue" description="Phosphohistidine; by autocatalysis" evidence="3">
    <location>
        <position position="390"/>
    </location>
</feature>
<feature type="modified residue" description="4-aspartylphosphate" evidence="4">
    <location>
        <position position="696"/>
    </location>
</feature>
<feature type="sequence conflict" description="In Ref. 1; AAQ07254." evidence="6" ref="1">
    <original>D</original>
    <variation>N</variation>
    <location>
        <position position="48"/>
    </location>
</feature>
<feature type="sequence conflict" description="In Ref. 1; AAQ07254." evidence="6" ref="1">
    <original>G</original>
    <variation>E</variation>
    <location>
        <position position="264"/>
    </location>
</feature>
<feature type="sequence conflict" description="In Ref. 1; AAQ07254." evidence="6" ref="1">
    <original>V</original>
    <variation>I</variation>
    <location>
        <position position="399"/>
    </location>
</feature>
<feature type="sequence conflict" description="In Ref. 1; AAQ07254." evidence="6" ref="1">
    <original>T</original>
    <variation>I</variation>
    <location>
        <position position="440"/>
    </location>
</feature>
<feature type="sequence conflict" description="In Ref. 1; AAQ07254." evidence="6" ref="1">
    <original>P</original>
    <variation>L</variation>
    <location>
        <position position="481"/>
    </location>
</feature>
<feature type="sequence conflict" description="In Ref. 1; AAQ07254." evidence="6" ref="1">
    <original>G</original>
    <variation>E</variation>
    <location>
        <position position="514"/>
    </location>
</feature>
<feature type="sequence conflict" description="In Ref. 1; AAQ07254." evidence="6" ref="1">
    <original>V</original>
    <variation>I</variation>
    <location>
        <position position="524"/>
    </location>
</feature>
<feature type="sequence conflict" description="In Ref. 1; AAQ07254." evidence="6" ref="1">
    <original>R</original>
    <variation>G</variation>
    <location>
        <position position="709"/>
    </location>
</feature>
<feature type="sequence conflict" description="In Ref. 1; AAQ07254." evidence="6" ref="1">
    <original>N</original>
    <variation>Y</variation>
    <location>
        <position position="721"/>
    </location>
</feature>
<proteinExistence type="evidence at transcript level"/>
<protein>
    <recommendedName>
        <fullName evidence="6">Ethylene receptor 4</fullName>
        <shortName evidence="6">OsETR4</shortName>
        <ecNumber evidence="6">2.7.13.3</ecNumber>
    </recommendedName>
    <alternativeName>
        <fullName evidence="7">OsPK3</fullName>
    </alternativeName>
</protein>
<keyword id="KW-0067">ATP-binding</keyword>
<keyword id="KW-0186">Copper</keyword>
<keyword id="KW-0256">Endoplasmic reticulum</keyword>
<keyword id="KW-0936">Ethylene signaling pathway</keyword>
<keyword id="KW-0418">Kinase</keyword>
<keyword id="KW-0472">Membrane</keyword>
<keyword id="KW-0479">Metal-binding</keyword>
<keyword id="KW-0547">Nucleotide-binding</keyword>
<keyword id="KW-0597">Phosphoprotein</keyword>
<keyword id="KW-0675">Receptor</keyword>
<keyword id="KW-1185">Reference proteome</keyword>
<keyword id="KW-0808">Transferase</keyword>
<keyword id="KW-0812">Transmembrane</keyword>
<keyword id="KW-1133">Transmembrane helix</keyword>
<keyword id="KW-0902">Two-component regulatory system</keyword>